<feature type="chain" id="PRO_0000272174" description="PTS system MurNAc-GlcNAc-specific EIIBC component">
    <location>
        <begin position="1"/>
        <end position="484"/>
    </location>
</feature>
<feature type="transmembrane region" description="Helical" evidence="3">
    <location>
        <begin position="135"/>
        <end position="155"/>
    </location>
</feature>
<feature type="transmembrane region" description="Helical" evidence="3">
    <location>
        <begin position="160"/>
        <end position="180"/>
    </location>
</feature>
<feature type="transmembrane region" description="Helical" evidence="3">
    <location>
        <begin position="200"/>
        <end position="220"/>
    </location>
</feature>
<feature type="transmembrane region" description="Helical" evidence="3">
    <location>
        <begin position="234"/>
        <end position="254"/>
    </location>
</feature>
<feature type="transmembrane region" description="Helical" evidence="3">
    <location>
        <begin position="274"/>
        <end position="294"/>
    </location>
</feature>
<feature type="transmembrane region" description="Helical" evidence="3">
    <location>
        <begin position="305"/>
        <end position="325"/>
    </location>
</feature>
<feature type="transmembrane region" description="Helical" evidence="3">
    <location>
        <begin position="349"/>
        <end position="369"/>
    </location>
</feature>
<feature type="transmembrane region" description="Helical" evidence="3">
    <location>
        <begin position="384"/>
        <end position="404"/>
    </location>
</feature>
<feature type="transmembrane region" description="Helical" evidence="3">
    <location>
        <begin position="408"/>
        <end position="428"/>
    </location>
</feature>
<feature type="transmembrane region" description="Helical" evidence="3">
    <location>
        <begin position="450"/>
        <end position="470"/>
    </location>
</feature>
<feature type="domain" description="PTS EIIB type-1" evidence="2">
    <location>
        <begin position="5"/>
        <end position="87"/>
    </location>
</feature>
<feature type="domain" description="PTS EIIC type-1" evidence="3">
    <location>
        <begin position="130"/>
        <end position="484"/>
    </location>
</feature>
<feature type="active site" description="Phosphocysteine intermediate; for EIIB activity" evidence="2">
    <location>
        <position position="27"/>
    </location>
</feature>
<name>PTXBC_STAAB</name>
<organism>
    <name type="scientific">Staphylococcus aureus (strain bovine RF122 / ET3-1)</name>
    <dbReference type="NCBI Taxonomy" id="273036"/>
    <lineage>
        <taxon>Bacteria</taxon>
        <taxon>Bacillati</taxon>
        <taxon>Bacillota</taxon>
        <taxon>Bacilli</taxon>
        <taxon>Bacillales</taxon>
        <taxon>Staphylococcaceae</taxon>
        <taxon>Staphylococcus</taxon>
    </lineage>
</organism>
<evidence type="ECO:0000250" key="1">
    <source>
        <dbReference type="UniProtKB" id="Q2FK70"/>
    </source>
</evidence>
<evidence type="ECO:0000255" key="2">
    <source>
        <dbReference type="PROSITE-ProRule" id="PRU00421"/>
    </source>
</evidence>
<evidence type="ECO:0000255" key="3">
    <source>
        <dbReference type="PROSITE-ProRule" id="PRU00426"/>
    </source>
</evidence>
<dbReference type="EC" id="2.7.1.-" evidence="1"/>
<dbReference type="EMBL" id="AJ938182">
    <property type="protein sequence ID" value="CAI79820.1"/>
    <property type="molecule type" value="Genomic_DNA"/>
</dbReference>
<dbReference type="RefSeq" id="WP_000159753.1">
    <property type="nucleotide sequence ID" value="NC_007622.1"/>
</dbReference>
<dbReference type="SMR" id="Q2YV12"/>
<dbReference type="KEGG" id="sab:SAB0132"/>
<dbReference type="HOGENOM" id="CLU_012312_2_0_9"/>
<dbReference type="UniPathway" id="UPA00544"/>
<dbReference type="GO" id="GO:0005886">
    <property type="term" value="C:plasma membrane"/>
    <property type="evidence" value="ECO:0007669"/>
    <property type="project" value="UniProtKB-SubCell"/>
</dbReference>
<dbReference type="GO" id="GO:0016301">
    <property type="term" value="F:kinase activity"/>
    <property type="evidence" value="ECO:0007669"/>
    <property type="project" value="UniProtKB-KW"/>
</dbReference>
<dbReference type="GO" id="GO:0008982">
    <property type="term" value="F:protein-N(PI)-phosphohistidine-sugar phosphotransferase activity"/>
    <property type="evidence" value="ECO:0007669"/>
    <property type="project" value="InterPro"/>
</dbReference>
<dbReference type="GO" id="GO:0090588">
    <property type="term" value="F:protein-phosphocysteine-N-acetylmuramate phosphotransferase system transporter activity"/>
    <property type="evidence" value="ECO:0007669"/>
    <property type="project" value="TreeGrafter"/>
</dbReference>
<dbReference type="GO" id="GO:0009254">
    <property type="term" value="P:peptidoglycan turnover"/>
    <property type="evidence" value="ECO:0007669"/>
    <property type="project" value="UniProtKB-UniPathway"/>
</dbReference>
<dbReference type="GO" id="GO:0009401">
    <property type="term" value="P:phosphoenolpyruvate-dependent sugar phosphotransferase system"/>
    <property type="evidence" value="ECO:0007669"/>
    <property type="project" value="UniProtKB-KW"/>
</dbReference>
<dbReference type="CDD" id="cd00212">
    <property type="entry name" value="PTS_IIB_glc"/>
    <property type="match status" value="1"/>
</dbReference>
<dbReference type="FunFam" id="3.30.1360.60:FF:000001">
    <property type="entry name" value="PTS system glucose-specific IIBC component PtsG"/>
    <property type="match status" value="1"/>
</dbReference>
<dbReference type="Gene3D" id="3.30.1360.60">
    <property type="entry name" value="Glucose permease domain IIB"/>
    <property type="match status" value="1"/>
</dbReference>
<dbReference type="InterPro" id="IPR036878">
    <property type="entry name" value="Glu_permease_IIB"/>
</dbReference>
<dbReference type="InterPro" id="IPR018113">
    <property type="entry name" value="PTrfase_EIIB_Cys"/>
</dbReference>
<dbReference type="InterPro" id="IPR003352">
    <property type="entry name" value="PTS_EIIC"/>
</dbReference>
<dbReference type="InterPro" id="IPR013013">
    <property type="entry name" value="PTS_EIIC_1"/>
</dbReference>
<dbReference type="InterPro" id="IPR001996">
    <property type="entry name" value="PTS_IIB_1"/>
</dbReference>
<dbReference type="InterPro" id="IPR050558">
    <property type="entry name" value="PTS_Sugar-Specific_Components"/>
</dbReference>
<dbReference type="PANTHER" id="PTHR30175">
    <property type="entry name" value="PHOSPHOTRANSFERASE SYSTEM TRANSPORT PROTEIN"/>
    <property type="match status" value="1"/>
</dbReference>
<dbReference type="PANTHER" id="PTHR30175:SF3">
    <property type="entry name" value="PTS SYSTEM N-ACETYLMURAMIC ACID-SPECIFIC EIIBC COMPONENT"/>
    <property type="match status" value="1"/>
</dbReference>
<dbReference type="Pfam" id="PF00367">
    <property type="entry name" value="PTS_EIIB"/>
    <property type="match status" value="1"/>
</dbReference>
<dbReference type="Pfam" id="PF02378">
    <property type="entry name" value="PTS_EIIC"/>
    <property type="match status" value="1"/>
</dbReference>
<dbReference type="SUPFAM" id="SSF55604">
    <property type="entry name" value="Glucose permease domain IIB"/>
    <property type="match status" value="1"/>
</dbReference>
<dbReference type="PROSITE" id="PS51098">
    <property type="entry name" value="PTS_EIIB_TYPE_1"/>
    <property type="match status" value="1"/>
</dbReference>
<dbReference type="PROSITE" id="PS01035">
    <property type="entry name" value="PTS_EIIB_TYPE_1_CYS"/>
    <property type="match status" value="1"/>
</dbReference>
<dbReference type="PROSITE" id="PS51103">
    <property type="entry name" value="PTS_EIIC_TYPE_1"/>
    <property type="match status" value="1"/>
</dbReference>
<accession>Q2YV12</accession>
<reference key="1">
    <citation type="journal article" date="2007" name="PLoS ONE">
        <title>Molecular correlates of host specialization in Staphylococcus aureus.</title>
        <authorList>
            <person name="Herron-Olson L."/>
            <person name="Fitzgerald J.R."/>
            <person name="Musser J.M."/>
            <person name="Kapur V."/>
        </authorList>
    </citation>
    <scope>NUCLEOTIDE SEQUENCE [LARGE SCALE GENOMIC DNA]</scope>
    <source>
        <strain>bovine RF122 / ET3-1</strain>
    </source>
</reference>
<protein>
    <recommendedName>
        <fullName evidence="1">PTS system MurNAc-GlcNAc-specific EIIBC component</fullName>
    </recommendedName>
    <domain>
        <recommendedName>
            <fullName>MurNAc-GlcNAc-specific phosphotransferase enzyme IIB component</fullName>
            <ecNumber evidence="1">2.7.1.-</ecNumber>
        </recommendedName>
        <alternativeName>
            <fullName>PTS system MurNAc-GlcNAc-specific EIIB component</fullName>
        </alternativeName>
    </domain>
    <domain>
        <recommendedName>
            <fullName>MurNAc-GlcNAc permease IIC component</fullName>
        </recommendedName>
        <alternativeName>
            <fullName>PTS system MurNAc-GlcNAc-specific EIIC component</fullName>
        </alternativeName>
    </domain>
</protein>
<comment type="function">
    <text evidence="1">The phosphoenolpyruvate-dependent sugar phosphotransferase system (sugar PTS), a major carbohydrate active transport system, catalyzes the phosphorylation of incoming sugar substrates concomitantly with their translocation across the cell membrane. This system is involved in the uptake and phosphorylation of MurNAc-GlcNAc, the principle peptidoglycan turnover product of S.aureus, yielding cytoplasmic MurNAc 6P-GlcNAc.</text>
</comment>
<comment type="catalytic activity">
    <reaction evidence="1">
        <text>N-acetyl-beta-D-muramate-(1-&gt;4)-N-acetyl-D-glucosamine(out) + N(pros)-phospho-L-histidyl-[protein] = 6-phospho-N-acetyl-beta-D-muramate-(1-&gt;4)-N-acetyl-D-glucosamine(in) + L-histidyl-[protein]</text>
        <dbReference type="Rhea" id="RHEA:66784"/>
        <dbReference type="Rhea" id="RHEA-COMP:9745"/>
        <dbReference type="Rhea" id="RHEA-COMP:9746"/>
        <dbReference type="ChEBI" id="CHEBI:29979"/>
        <dbReference type="ChEBI" id="CHEBI:64837"/>
        <dbReference type="ChEBI" id="CHEBI:167476"/>
        <dbReference type="ChEBI" id="CHEBI:167477"/>
    </reaction>
    <physiologicalReaction direction="left-to-right" evidence="1">
        <dbReference type="Rhea" id="RHEA:66785"/>
    </physiologicalReaction>
</comment>
<comment type="pathway">
    <text evidence="1">Cell wall biogenesis; peptidoglycan recycling.</text>
</comment>
<comment type="subcellular location">
    <subcellularLocation>
        <location evidence="3">Cell membrane</location>
        <topology evidence="3">Multi-pass membrane protein</topology>
    </subcellularLocation>
</comment>
<comment type="domain">
    <text>The EIIB domain is phosphorylated by phospho-EIIA on a cysteinyl or histidyl residue, depending on the transported sugar. Then, it transfers the phosphoryl group to the sugar substrate concomitantly with the sugar uptake processed by the EIIC domain.</text>
</comment>
<comment type="domain">
    <text>The EIIC domain forms the PTS system translocation channel and contains the specific substrate-binding site.</text>
</comment>
<keyword id="KW-1003">Cell membrane</keyword>
<keyword id="KW-0418">Kinase</keyword>
<keyword id="KW-0472">Membrane</keyword>
<keyword id="KW-0598">Phosphotransferase system</keyword>
<keyword id="KW-0762">Sugar transport</keyword>
<keyword id="KW-0808">Transferase</keyword>
<keyword id="KW-0812">Transmembrane</keyword>
<keyword id="KW-1133">Transmembrane helix</keyword>
<keyword id="KW-0813">Transport</keyword>
<proteinExistence type="inferred from homology"/>
<sequence>MTKEQQLAERIIAAVGGMDNIDSVMNCMTRVRIKVLDENKVDDQELRHIDGVMGVIHDERIQVVVGPGTVNKVANHMAELSGVKLGDPIPHNHNDSEKMDYKSYAADKAKANKEAHKAKQKNGKLNKVLKSIANIFIPLIPAFIGAGLIGGIAAVLSNLMVAGYISGAWITQLITVFNVIKDGMLAYLAIFTGINAAKEFGATPGLGGVIGGTTLLTGIAGKNILMNVFTGEPLQPGQGGIIGVIFAVWILSIVEKRLHKIVPNAIDIIVTPAIALLIVGLLTIFIFMPLAGFVSDSLVSVVNGIISIGGVFSGFIIGASFLPLVMLGLHHIFTPIHIEMINQSGATYLLPIAAMAGAGQVGAALALWVRCKRNTTLRNTLKGALPVGFLGIGEPLIYGVTLPLGRPFLTACIGGGIGGAVIGGIGHIGAKAIGPSGVSLLPLISDNMYLGYIAGLLTAYAGGFVCTYLFGTTKAMRQTDLLGD</sequence>
<gene>
    <name type="ordered locus">SAB0132</name>
</gene>